<keyword id="KW-0130">Cell adhesion</keyword>
<keyword id="KW-1003">Cell membrane</keyword>
<keyword id="KW-0472">Membrane</keyword>
<keyword id="KW-0597">Phosphoprotein</keyword>
<keyword id="KW-0628">Postsynaptic cell membrane</keyword>
<keyword id="KW-1185">Reference proteome</keyword>
<keyword id="KW-0770">Synapse</keyword>
<keyword id="KW-0812">Transmembrane</keyword>
<keyword id="KW-1133">Transmembrane helix</keyword>
<name>NLGNX_MACMU</name>
<organism>
    <name type="scientific">Macaca mulatta</name>
    <name type="common">Rhesus macaque</name>
    <dbReference type="NCBI Taxonomy" id="9544"/>
    <lineage>
        <taxon>Eukaryota</taxon>
        <taxon>Metazoa</taxon>
        <taxon>Chordata</taxon>
        <taxon>Craniata</taxon>
        <taxon>Vertebrata</taxon>
        <taxon>Euteleostomi</taxon>
        <taxon>Mammalia</taxon>
        <taxon>Eutheria</taxon>
        <taxon>Euarchontoglires</taxon>
        <taxon>Primates</taxon>
        <taxon>Haplorrhini</taxon>
        <taxon>Catarrhini</taxon>
        <taxon>Cercopithecidae</taxon>
        <taxon>Cercopithecinae</taxon>
        <taxon>Macaca</taxon>
    </lineage>
</organism>
<comment type="function">
    <text evidence="4">Cell surface protein involved in cell-cell-interactions via its interactions with neurexin family members.</text>
</comment>
<comment type="subunit">
    <text evidence="2 4">Homodimer. Interacts with NRXN1 in a calcium-dependent manner. Interaction with neurexins is mediated by heparan sulfate glycan modification on neurexin. Interacts through its C-terminus with DLG4/PSD-95 third PDZ domain.</text>
</comment>
<comment type="subcellular location">
    <subcellularLocation>
        <location>Cell membrane</location>
        <topology>Single-pass type I membrane protein</topology>
    </subcellularLocation>
    <subcellularLocation>
        <location evidence="1">Postsynaptic density membrane</location>
    </subcellularLocation>
</comment>
<comment type="similarity">
    <text evidence="7">Belongs to the type-B carboxylesterase/lipase family.</text>
</comment>
<gene>
    <name type="primary">NLGN4X</name>
    <name type="synonym">NLGN4</name>
</gene>
<reference key="1">
    <citation type="submission" date="2001-12" db="EMBL/GenBank/DDBJ databases">
        <authorList>
            <person name="Mungenast A.E."/>
            <person name="Ojeda S.R."/>
        </authorList>
    </citation>
    <scope>NUCLEOTIDE SEQUENCE [MRNA]</scope>
    <source>
        <tissue>Hypothalamus</tissue>
    </source>
</reference>
<proteinExistence type="evidence at transcript level"/>
<sequence>FQYVSTTTKVPPPDMTSFPYGTRRSPAKIWPTTKRPAITPANNPKHSKDPHKTGPEDTTVLIETKRDYSTELSVTIAVGASLLFLNILAFAALYYKKDKRRHETHRRPSPQRNTTNDIAHIQNEEIMSLQMKQLEHDHECESLQAHDTLRLTCPPDYTLTLRRSPDDIPLMTPNTITMIPNTLTGMQPLHTFNTFSGGQNSTNLPHGHSTTRV</sequence>
<evidence type="ECO:0000250" key="1"/>
<evidence type="ECO:0000250" key="2">
    <source>
        <dbReference type="UniProtKB" id="B0F2B4"/>
    </source>
</evidence>
<evidence type="ECO:0000250" key="3">
    <source>
        <dbReference type="UniProtKB" id="Q62889"/>
    </source>
</evidence>
<evidence type="ECO:0000250" key="4">
    <source>
        <dbReference type="UniProtKB" id="Q8N0W4"/>
    </source>
</evidence>
<evidence type="ECO:0000255" key="5"/>
<evidence type="ECO:0000256" key="6">
    <source>
        <dbReference type="SAM" id="MobiDB-lite"/>
    </source>
</evidence>
<evidence type="ECO:0000305" key="7"/>
<dbReference type="EMBL" id="AF462606">
    <property type="protein sequence ID" value="AAL66382.1"/>
    <property type="molecule type" value="mRNA"/>
</dbReference>
<dbReference type="SMR" id="Q8WMG7"/>
<dbReference type="STRING" id="9544.ENSMMUP00000041272"/>
<dbReference type="PaxDb" id="9544-ENSMMUP00000014838"/>
<dbReference type="eggNOG" id="KOG1516">
    <property type="taxonomic scope" value="Eukaryota"/>
</dbReference>
<dbReference type="HOGENOM" id="CLU_006586_5_1_1"/>
<dbReference type="InParanoid" id="Q8WMG7"/>
<dbReference type="Proteomes" id="UP000006718">
    <property type="component" value="Unassembled WGS sequence"/>
</dbReference>
<dbReference type="GO" id="GO:0098839">
    <property type="term" value="C:postsynaptic density membrane"/>
    <property type="evidence" value="ECO:0007669"/>
    <property type="project" value="UniProtKB-SubCell"/>
</dbReference>
<dbReference type="GO" id="GO:0007155">
    <property type="term" value="P:cell adhesion"/>
    <property type="evidence" value="ECO:0007669"/>
    <property type="project" value="UniProtKB-KW"/>
</dbReference>
<dbReference type="InterPro" id="IPR051093">
    <property type="entry name" value="Neuroligin/BSAL"/>
</dbReference>
<dbReference type="PANTHER" id="PTHR43903">
    <property type="entry name" value="NEUROLIGIN"/>
    <property type="match status" value="1"/>
</dbReference>
<accession>Q8WMG7</accession>
<feature type="chain" id="PRO_0000070299" description="Neuroligin-4, X-linked">
    <location>
        <begin position="1" status="less than"/>
        <end position="213"/>
    </location>
</feature>
<feature type="topological domain" description="Extracellular" evidence="5">
    <location>
        <begin position="1" status="less than"/>
        <end position="73"/>
    </location>
</feature>
<feature type="transmembrane region" description="Helical" evidence="5">
    <location>
        <begin position="74"/>
        <end position="94"/>
    </location>
</feature>
<feature type="topological domain" description="Cytoplasmic" evidence="5">
    <location>
        <begin position="95"/>
        <end position="213"/>
    </location>
</feature>
<feature type="region of interest" description="Disordered" evidence="6">
    <location>
        <begin position="1"/>
        <end position="56"/>
    </location>
</feature>
<feature type="compositionally biased region" description="Basic and acidic residues" evidence="6">
    <location>
        <begin position="46"/>
        <end position="55"/>
    </location>
</feature>
<feature type="modified residue" description="Phosphoserine" evidence="3">
    <location>
        <position position="109"/>
    </location>
</feature>
<feature type="non-terminal residue">
    <location>
        <position position="1"/>
    </location>
</feature>
<protein>
    <recommendedName>
        <fullName>Neuroligin-4, X-linked</fullName>
    </recommendedName>
</protein>